<accession>Q5X597</accession>
<proteinExistence type="inferred from homology"/>
<keyword id="KW-0067">ATP-binding</keyword>
<keyword id="KW-0173">Coenzyme A biosynthesis</keyword>
<keyword id="KW-0963">Cytoplasm</keyword>
<keyword id="KW-0418">Kinase</keyword>
<keyword id="KW-0547">Nucleotide-binding</keyword>
<keyword id="KW-0808">Transferase</keyword>
<organism>
    <name type="scientific">Legionella pneumophila (strain Paris)</name>
    <dbReference type="NCBI Taxonomy" id="297246"/>
    <lineage>
        <taxon>Bacteria</taxon>
        <taxon>Pseudomonadati</taxon>
        <taxon>Pseudomonadota</taxon>
        <taxon>Gammaproteobacteria</taxon>
        <taxon>Legionellales</taxon>
        <taxon>Legionellaceae</taxon>
        <taxon>Legionella</taxon>
    </lineage>
</organism>
<comment type="function">
    <text evidence="1">Catalyzes the phosphorylation of the 3'-hydroxyl group of dephosphocoenzyme A to form coenzyme A.</text>
</comment>
<comment type="catalytic activity">
    <reaction evidence="1">
        <text>3'-dephospho-CoA + ATP = ADP + CoA + H(+)</text>
        <dbReference type="Rhea" id="RHEA:18245"/>
        <dbReference type="ChEBI" id="CHEBI:15378"/>
        <dbReference type="ChEBI" id="CHEBI:30616"/>
        <dbReference type="ChEBI" id="CHEBI:57287"/>
        <dbReference type="ChEBI" id="CHEBI:57328"/>
        <dbReference type="ChEBI" id="CHEBI:456216"/>
        <dbReference type="EC" id="2.7.1.24"/>
    </reaction>
</comment>
<comment type="pathway">
    <text evidence="1">Cofactor biosynthesis; coenzyme A biosynthesis; CoA from (R)-pantothenate: step 5/5.</text>
</comment>
<comment type="subcellular location">
    <subcellularLocation>
        <location evidence="1">Cytoplasm</location>
    </subcellularLocation>
</comment>
<comment type="similarity">
    <text evidence="1">Belongs to the CoaE family.</text>
</comment>
<name>COAE_LEGPA</name>
<feature type="chain" id="PRO_0000243301" description="Dephospho-CoA kinase">
    <location>
        <begin position="1"/>
        <end position="201"/>
    </location>
</feature>
<feature type="domain" description="DPCK" evidence="1">
    <location>
        <begin position="4"/>
        <end position="201"/>
    </location>
</feature>
<feature type="binding site" evidence="1">
    <location>
        <begin position="12"/>
        <end position="17"/>
    </location>
    <ligand>
        <name>ATP</name>
        <dbReference type="ChEBI" id="CHEBI:30616"/>
    </ligand>
</feature>
<reference key="1">
    <citation type="journal article" date="2004" name="Nat. Genet.">
        <title>Evidence in the Legionella pneumophila genome for exploitation of host cell functions and high genome plasticity.</title>
        <authorList>
            <person name="Cazalet C."/>
            <person name="Rusniok C."/>
            <person name="Brueggemann H."/>
            <person name="Zidane N."/>
            <person name="Magnier A."/>
            <person name="Ma L."/>
            <person name="Tichit M."/>
            <person name="Jarraud S."/>
            <person name="Bouchier C."/>
            <person name="Vandenesch F."/>
            <person name="Kunst F."/>
            <person name="Etienne J."/>
            <person name="Glaser P."/>
            <person name="Buchrieser C."/>
        </authorList>
    </citation>
    <scope>NUCLEOTIDE SEQUENCE [LARGE SCALE GENOMIC DNA]</scope>
    <source>
        <strain>Paris</strain>
    </source>
</reference>
<sequence>MVYSVGLTGNIASGKSTVAEFFSELGINVIYADKIAKELTSKNTPCYQDIISHFGSSVVLNNGELDRKRIRDIIFSNSNERLWLESLLHPVIREKIEEQLIACTSPYCLIEIPLLFNKHHYPYLQKVLLVIAPLESQLDRIVKRDHCTKKQALAILATQPNLEQRLEAADDVLINESGLSELKAKVNKLHQKYLREAKIKQ</sequence>
<gene>
    <name evidence="1" type="primary">coaE</name>
    <name type="ordered locus">lpp1423</name>
</gene>
<evidence type="ECO:0000255" key="1">
    <source>
        <dbReference type="HAMAP-Rule" id="MF_00376"/>
    </source>
</evidence>
<dbReference type="EC" id="2.7.1.24" evidence="1"/>
<dbReference type="EMBL" id="CR628336">
    <property type="protein sequence ID" value="CAH12574.1"/>
    <property type="molecule type" value="Genomic_DNA"/>
</dbReference>
<dbReference type="RefSeq" id="WP_011213752.1">
    <property type="nucleotide sequence ID" value="NC_006368.1"/>
</dbReference>
<dbReference type="SMR" id="Q5X597"/>
<dbReference type="KEGG" id="lpp:lpp1423"/>
<dbReference type="LegioList" id="lpp1423"/>
<dbReference type="HOGENOM" id="CLU_057180_1_2_6"/>
<dbReference type="UniPathway" id="UPA00241">
    <property type="reaction ID" value="UER00356"/>
</dbReference>
<dbReference type="GO" id="GO:0005737">
    <property type="term" value="C:cytoplasm"/>
    <property type="evidence" value="ECO:0007669"/>
    <property type="project" value="UniProtKB-SubCell"/>
</dbReference>
<dbReference type="GO" id="GO:0005524">
    <property type="term" value="F:ATP binding"/>
    <property type="evidence" value="ECO:0007669"/>
    <property type="project" value="UniProtKB-UniRule"/>
</dbReference>
<dbReference type="GO" id="GO:0004140">
    <property type="term" value="F:dephospho-CoA kinase activity"/>
    <property type="evidence" value="ECO:0007669"/>
    <property type="project" value="UniProtKB-UniRule"/>
</dbReference>
<dbReference type="GO" id="GO:0015937">
    <property type="term" value="P:coenzyme A biosynthetic process"/>
    <property type="evidence" value="ECO:0007669"/>
    <property type="project" value="UniProtKB-UniRule"/>
</dbReference>
<dbReference type="CDD" id="cd02022">
    <property type="entry name" value="DPCK"/>
    <property type="match status" value="1"/>
</dbReference>
<dbReference type="Gene3D" id="3.40.50.300">
    <property type="entry name" value="P-loop containing nucleotide triphosphate hydrolases"/>
    <property type="match status" value="1"/>
</dbReference>
<dbReference type="HAMAP" id="MF_00376">
    <property type="entry name" value="Dephospho_CoA_kinase"/>
    <property type="match status" value="1"/>
</dbReference>
<dbReference type="InterPro" id="IPR001977">
    <property type="entry name" value="Depp_CoAkinase"/>
</dbReference>
<dbReference type="InterPro" id="IPR027417">
    <property type="entry name" value="P-loop_NTPase"/>
</dbReference>
<dbReference type="NCBIfam" id="TIGR00152">
    <property type="entry name" value="dephospho-CoA kinase"/>
    <property type="match status" value="1"/>
</dbReference>
<dbReference type="PANTHER" id="PTHR10695:SF46">
    <property type="entry name" value="BIFUNCTIONAL COENZYME A SYNTHASE-RELATED"/>
    <property type="match status" value="1"/>
</dbReference>
<dbReference type="PANTHER" id="PTHR10695">
    <property type="entry name" value="DEPHOSPHO-COA KINASE-RELATED"/>
    <property type="match status" value="1"/>
</dbReference>
<dbReference type="Pfam" id="PF01121">
    <property type="entry name" value="CoaE"/>
    <property type="match status" value="1"/>
</dbReference>
<dbReference type="SUPFAM" id="SSF52540">
    <property type="entry name" value="P-loop containing nucleoside triphosphate hydrolases"/>
    <property type="match status" value="1"/>
</dbReference>
<dbReference type="PROSITE" id="PS51219">
    <property type="entry name" value="DPCK"/>
    <property type="match status" value="1"/>
</dbReference>
<protein>
    <recommendedName>
        <fullName evidence="1">Dephospho-CoA kinase</fullName>
        <ecNumber evidence="1">2.7.1.24</ecNumber>
    </recommendedName>
    <alternativeName>
        <fullName evidence="1">Dephosphocoenzyme A kinase</fullName>
    </alternativeName>
</protein>